<comment type="subcellular location">
    <subcellularLocation>
        <location evidence="4">Membrane</location>
        <topology evidence="4">Multi-pass membrane protein</topology>
    </subcellularLocation>
</comment>
<comment type="similarity">
    <text evidence="4">Belongs to the ABC transporter superfamily. ABCG family. Eye pigment precursor importer (TC 3.A.1.204) subfamily.</text>
</comment>
<keyword id="KW-0067">ATP-binding</keyword>
<keyword id="KW-0472">Membrane</keyword>
<keyword id="KW-0547">Nucleotide-binding</keyword>
<keyword id="KW-1185">Reference proteome</keyword>
<keyword id="KW-0812">Transmembrane</keyword>
<keyword id="KW-1133">Transmembrane helix</keyword>
<keyword id="KW-0813">Transport</keyword>
<sequence>MIIFKNNEIRFNSILKSILLLLLLFINGNNCKTAQQFLDENFNHALFREHQLEKEYKTKQLVKDDPNMYSDWTEVPAATAEAVTIMRGDDYYYDYDKEQKIEMIVFGSENAISSGSAQNYWYGQTCEATNFNNTPTTTCPNDCHSYWGQGQCNETSSTCICNYFFIGDDCSENVDPQHNWDKMNCNGGRYCPPIYNYPTPRSCVCPPGQAGLECTVCLNNEGCQALTGNYSSSFECNSSPYTYFEKSYSCVVTSAEVNGDLNNSTASASIDCQFPGGNYNTQTGVCSMNLYYRIHGSPLYFNCSFTECDRTILPGQNQSIVCQNSVCNCTTYCGFILDGLISAVTGEATFECGAQTNPDGTSNCLFSQYTINQMLPAIPLQCMSGECIDVATGAPTPPPIYPVPVASMSFLYIYVGSGVGFIGLTLLIGAIFLIFSLQEDRKNFKEDTHLVCELSFHNISCYVNERSGFFGKDVKRKQILDNVNGVCPPGQLTALMGLSGSGKTSLLDILSGRKNVGNIDGKVLINGAPVGKNFKRISGYVTQDDIQIGTLTCREHLMFAALLKLPENMSLEIKQQRVASVLEELGLTRVADNPIGTSEKRGISGGERRRLSIATELIVDPSILFIDEPTSGLDSHSASELITKLKQLANNSTKGQRTIIFSIHQPSAELFEQFDNLILLHQGNPYFSGKREDSVNYFIKQKIAGMTEFEQQNYRMHLKNPADFIISMVTDKNCQRFNSTYVDSRVASPFYQSTSPALSSNSNNSDINLNHHRIINNPHNQNIHHQQHHHHHRHIYGINGPSIDNNDSDSDSDERDHLLASDNINNNNNNNKVKNNDNNNKNNDDDVEDIEEASPIIVVGNQGEPLASHIKIGKVEEYATSFWTQFFVVCRRSLLNYMRNPFLLRTTYFVHIFVGLTLGYLFWKLPANLEPGCQNRFGAMFFMTALLSFGSITSLDLFYNDRIIFIRERANGFYRTSAYFLAKVVTDIIPMRVIPPIILGSICYYMIGLRPGILHFIYFLISLVLTSTVASSMCMAISTISPTFGTANMVSILLLFVFLLFDGFLLARSSIPKYLIGLVWISFMSYGLEIPVVNEFNGLWIEYNPPNTRPTYADGLEFLSTIGANPNRLFTDMYVLLGMIVGYLLLAYVFLRFLVREYR</sequence>
<gene>
    <name type="primary">abcG24</name>
    <name type="ORF">DDB_G0282103</name>
</gene>
<reference key="1">
    <citation type="journal article" date="2005" name="Nature">
        <title>The genome of the social amoeba Dictyostelium discoideum.</title>
        <authorList>
            <person name="Eichinger L."/>
            <person name="Pachebat J.A."/>
            <person name="Gloeckner G."/>
            <person name="Rajandream M.A."/>
            <person name="Sucgang R."/>
            <person name="Berriman M."/>
            <person name="Song J."/>
            <person name="Olsen R."/>
            <person name="Szafranski K."/>
            <person name="Xu Q."/>
            <person name="Tunggal B."/>
            <person name="Kummerfeld S."/>
            <person name="Madera M."/>
            <person name="Konfortov B.A."/>
            <person name="Rivero F."/>
            <person name="Bankier A.T."/>
            <person name="Lehmann R."/>
            <person name="Hamlin N."/>
            <person name="Davies R."/>
            <person name="Gaudet P."/>
            <person name="Fey P."/>
            <person name="Pilcher K."/>
            <person name="Chen G."/>
            <person name="Saunders D."/>
            <person name="Sodergren E.J."/>
            <person name="Davis P."/>
            <person name="Kerhornou A."/>
            <person name="Nie X."/>
            <person name="Hall N."/>
            <person name="Anjard C."/>
            <person name="Hemphill L."/>
            <person name="Bason N."/>
            <person name="Farbrother P."/>
            <person name="Desany B."/>
            <person name="Just E."/>
            <person name="Morio T."/>
            <person name="Rost R."/>
            <person name="Churcher C.M."/>
            <person name="Cooper J."/>
            <person name="Haydock S."/>
            <person name="van Driessche N."/>
            <person name="Cronin A."/>
            <person name="Goodhead I."/>
            <person name="Muzny D.M."/>
            <person name="Mourier T."/>
            <person name="Pain A."/>
            <person name="Lu M."/>
            <person name="Harper D."/>
            <person name="Lindsay R."/>
            <person name="Hauser H."/>
            <person name="James K.D."/>
            <person name="Quiles M."/>
            <person name="Madan Babu M."/>
            <person name="Saito T."/>
            <person name="Buchrieser C."/>
            <person name="Wardroper A."/>
            <person name="Felder M."/>
            <person name="Thangavelu M."/>
            <person name="Johnson D."/>
            <person name="Knights A."/>
            <person name="Loulseged H."/>
            <person name="Mungall K.L."/>
            <person name="Oliver K."/>
            <person name="Price C."/>
            <person name="Quail M.A."/>
            <person name="Urushihara H."/>
            <person name="Hernandez J."/>
            <person name="Rabbinowitsch E."/>
            <person name="Steffen D."/>
            <person name="Sanders M."/>
            <person name="Ma J."/>
            <person name="Kohara Y."/>
            <person name="Sharp S."/>
            <person name="Simmonds M.N."/>
            <person name="Spiegler S."/>
            <person name="Tivey A."/>
            <person name="Sugano S."/>
            <person name="White B."/>
            <person name="Walker D."/>
            <person name="Woodward J.R."/>
            <person name="Winckler T."/>
            <person name="Tanaka Y."/>
            <person name="Shaulsky G."/>
            <person name="Schleicher M."/>
            <person name="Weinstock G.M."/>
            <person name="Rosenthal A."/>
            <person name="Cox E.C."/>
            <person name="Chisholm R.L."/>
            <person name="Gibbs R.A."/>
            <person name="Loomis W.F."/>
            <person name="Platzer M."/>
            <person name="Kay R.R."/>
            <person name="Williams J.G."/>
            <person name="Dear P.H."/>
            <person name="Noegel A.A."/>
            <person name="Barrell B.G."/>
            <person name="Kuspa A."/>
        </authorList>
    </citation>
    <scope>NUCLEOTIDE SEQUENCE [LARGE SCALE GENOMIC DNA]</scope>
    <source>
        <strain>AX4</strain>
    </source>
</reference>
<organism>
    <name type="scientific">Dictyostelium discoideum</name>
    <name type="common">Social amoeba</name>
    <dbReference type="NCBI Taxonomy" id="44689"/>
    <lineage>
        <taxon>Eukaryota</taxon>
        <taxon>Amoebozoa</taxon>
        <taxon>Evosea</taxon>
        <taxon>Eumycetozoa</taxon>
        <taxon>Dictyostelia</taxon>
        <taxon>Dictyosteliales</taxon>
        <taxon>Dictyosteliaceae</taxon>
        <taxon>Dictyostelium</taxon>
    </lineage>
</organism>
<protein>
    <recommendedName>
        <fullName>ABC transporter G family member 24</fullName>
    </recommendedName>
    <alternativeName>
        <fullName>ABC transporter ABCG.24</fullName>
    </alternativeName>
</protein>
<accession>Q54T02</accession>
<feature type="chain" id="PRO_0000391407" description="ABC transporter G family member 24">
    <location>
        <begin position="1"/>
        <end position="1159"/>
    </location>
</feature>
<feature type="transmembrane region" description="Helical" evidence="1">
    <location>
        <begin position="11"/>
        <end position="31"/>
    </location>
</feature>
<feature type="transmembrane region" description="Helical" evidence="1">
    <location>
        <begin position="415"/>
        <end position="435"/>
    </location>
</feature>
<feature type="transmembrane region" description="Helical" evidence="1">
    <location>
        <begin position="909"/>
        <end position="929"/>
    </location>
</feature>
<feature type="transmembrane region" description="Helical" evidence="1">
    <location>
        <begin position="937"/>
        <end position="957"/>
    </location>
</feature>
<feature type="transmembrane region" description="Helical" evidence="1">
    <location>
        <begin position="1005"/>
        <end position="1025"/>
    </location>
</feature>
<feature type="transmembrane region" description="Helical" evidence="1">
    <location>
        <begin position="1047"/>
        <end position="1067"/>
    </location>
</feature>
<feature type="transmembrane region" description="Helical" evidence="1">
    <location>
        <begin position="1074"/>
        <end position="1094"/>
    </location>
</feature>
<feature type="transmembrane region" description="Helical" evidence="1">
    <location>
        <begin position="1135"/>
        <end position="1155"/>
    </location>
</feature>
<feature type="domain" description="ABC transporter" evidence="2">
    <location>
        <begin position="454"/>
        <end position="707"/>
    </location>
</feature>
<feature type="domain" description="ABC transmembrane type-2">
    <location>
        <begin position="902"/>
        <end position="1154"/>
    </location>
</feature>
<feature type="region of interest" description="Disordered" evidence="3">
    <location>
        <begin position="752"/>
        <end position="846"/>
    </location>
</feature>
<feature type="compositionally biased region" description="Low complexity" evidence="3">
    <location>
        <begin position="759"/>
        <end position="768"/>
    </location>
</feature>
<feature type="compositionally biased region" description="Low complexity" evidence="3">
    <location>
        <begin position="775"/>
        <end position="784"/>
    </location>
</feature>
<feature type="compositionally biased region" description="Basic residues" evidence="3">
    <location>
        <begin position="785"/>
        <end position="795"/>
    </location>
</feature>
<feature type="compositionally biased region" description="Low complexity" evidence="3">
    <location>
        <begin position="822"/>
        <end position="841"/>
    </location>
</feature>
<feature type="binding site" evidence="2">
    <location>
        <begin position="497"/>
        <end position="504"/>
    </location>
    <ligand>
        <name>ATP</name>
        <dbReference type="ChEBI" id="CHEBI:30616"/>
    </ligand>
</feature>
<proteinExistence type="inferred from homology"/>
<evidence type="ECO:0000255" key="1"/>
<evidence type="ECO:0000255" key="2">
    <source>
        <dbReference type="PROSITE-ProRule" id="PRU00434"/>
    </source>
</evidence>
<evidence type="ECO:0000256" key="3">
    <source>
        <dbReference type="SAM" id="MobiDB-lite"/>
    </source>
</evidence>
<evidence type="ECO:0000305" key="4"/>
<dbReference type="EMBL" id="AAFI02000045">
    <property type="protein sequence ID" value="EAL66377.1"/>
    <property type="molecule type" value="Genomic_DNA"/>
</dbReference>
<dbReference type="RefSeq" id="XP_640353.1">
    <property type="nucleotide sequence ID" value="XM_635261.1"/>
</dbReference>
<dbReference type="SMR" id="Q54T02"/>
<dbReference type="FunCoup" id="Q54T02">
    <property type="interactions" value="53"/>
</dbReference>
<dbReference type="STRING" id="44689.Q54T02"/>
<dbReference type="GlyGen" id="Q54T02">
    <property type="glycosylation" value="1 site"/>
</dbReference>
<dbReference type="PaxDb" id="44689-DDB0216383"/>
<dbReference type="EnsemblProtists" id="EAL66377">
    <property type="protein sequence ID" value="EAL66377"/>
    <property type="gene ID" value="DDB_G0282103"/>
</dbReference>
<dbReference type="GeneID" id="8623408"/>
<dbReference type="KEGG" id="ddi:DDB_G0282103"/>
<dbReference type="dictyBase" id="DDB_G0282103">
    <property type="gene designation" value="abcG24"/>
</dbReference>
<dbReference type="VEuPathDB" id="AmoebaDB:DDB_G0282103"/>
<dbReference type="eggNOG" id="KOG0061">
    <property type="taxonomic scope" value="Eukaryota"/>
</dbReference>
<dbReference type="HOGENOM" id="CLU_000604_57_1_1"/>
<dbReference type="InParanoid" id="Q54T02"/>
<dbReference type="OMA" id="NEFNGLW"/>
<dbReference type="PhylomeDB" id="Q54T02"/>
<dbReference type="Reactome" id="R-DDI-1369062">
    <property type="pathway name" value="ABC transporters in lipid homeostasis"/>
</dbReference>
<dbReference type="Reactome" id="R-DDI-1660661">
    <property type="pathway name" value="Sphingolipid de novo biosynthesis"/>
</dbReference>
<dbReference type="Reactome" id="R-DDI-189451">
    <property type="pathway name" value="Heme biosynthesis"/>
</dbReference>
<dbReference type="Reactome" id="R-DDI-189483">
    <property type="pathway name" value="Heme degradation"/>
</dbReference>
<dbReference type="Reactome" id="R-DDI-917937">
    <property type="pathway name" value="Iron uptake and transport"/>
</dbReference>
<dbReference type="Reactome" id="R-DDI-9753281">
    <property type="pathway name" value="Paracetamol ADME"/>
</dbReference>
<dbReference type="Reactome" id="R-DDI-9793528">
    <property type="pathway name" value="Ciprofloxacin ADME"/>
</dbReference>
<dbReference type="PRO" id="PR:Q54T02"/>
<dbReference type="Proteomes" id="UP000002195">
    <property type="component" value="Chromosome 3"/>
</dbReference>
<dbReference type="GO" id="GO:0016020">
    <property type="term" value="C:membrane"/>
    <property type="evidence" value="ECO:0000318"/>
    <property type="project" value="GO_Central"/>
</dbReference>
<dbReference type="GO" id="GO:0140359">
    <property type="term" value="F:ABC-type transporter activity"/>
    <property type="evidence" value="ECO:0007669"/>
    <property type="project" value="InterPro"/>
</dbReference>
<dbReference type="GO" id="GO:0005524">
    <property type="term" value="F:ATP binding"/>
    <property type="evidence" value="ECO:0007669"/>
    <property type="project" value="UniProtKB-KW"/>
</dbReference>
<dbReference type="GO" id="GO:0016887">
    <property type="term" value="F:ATP hydrolysis activity"/>
    <property type="evidence" value="ECO:0007669"/>
    <property type="project" value="InterPro"/>
</dbReference>
<dbReference type="GO" id="GO:0042626">
    <property type="term" value="F:ATPase-coupled transmembrane transporter activity"/>
    <property type="evidence" value="ECO:0000318"/>
    <property type="project" value="GO_Central"/>
</dbReference>
<dbReference type="GO" id="GO:0031154">
    <property type="term" value="P:culmination involved in sorocarp development"/>
    <property type="evidence" value="ECO:0000315"/>
    <property type="project" value="dictyBase"/>
</dbReference>
<dbReference type="GO" id="GO:0031288">
    <property type="term" value="P:sorocarp morphogenesis"/>
    <property type="evidence" value="ECO:0000315"/>
    <property type="project" value="dictyBase"/>
</dbReference>
<dbReference type="GO" id="GO:0055085">
    <property type="term" value="P:transmembrane transport"/>
    <property type="evidence" value="ECO:0000318"/>
    <property type="project" value="GO_Central"/>
</dbReference>
<dbReference type="CDD" id="cd03213">
    <property type="entry name" value="ABCG_EPDR"/>
    <property type="match status" value="1"/>
</dbReference>
<dbReference type="FunFam" id="3.40.50.300:FF:004290">
    <property type="entry name" value="ABC transporter G family member 24"/>
    <property type="match status" value="1"/>
</dbReference>
<dbReference type="Gene3D" id="3.40.50.300">
    <property type="entry name" value="P-loop containing nucleotide triphosphate hydrolases"/>
    <property type="match status" value="1"/>
</dbReference>
<dbReference type="InterPro" id="IPR003593">
    <property type="entry name" value="AAA+_ATPase"/>
</dbReference>
<dbReference type="InterPro" id="IPR013525">
    <property type="entry name" value="ABC2_TM"/>
</dbReference>
<dbReference type="InterPro" id="IPR003439">
    <property type="entry name" value="ABC_transporter-like_ATP-bd"/>
</dbReference>
<dbReference type="InterPro" id="IPR017871">
    <property type="entry name" value="ABC_transporter-like_CS"/>
</dbReference>
<dbReference type="InterPro" id="IPR050352">
    <property type="entry name" value="ABCG_transporters"/>
</dbReference>
<dbReference type="InterPro" id="IPR000742">
    <property type="entry name" value="EGF-like_dom"/>
</dbReference>
<dbReference type="InterPro" id="IPR027417">
    <property type="entry name" value="P-loop_NTPase"/>
</dbReference>
<dbReference type="PANTHER" id="PTHR48041:SF29">
    <property type="entry name" value="ABC TRANSPORTER G FAMILY MEMBER 24"/>
    <property type="match status" value="1"/>
</dbReference>
<dbReference type="PANTHER" id="PTHR48041">
    <property type="entry name" value="ABC TRANSPORTER G FAMILY MEMBER 28"/>
    <property type="match status" value="1"/>
</dbReference>
<dbReference type="Pfam" id="PF01061">
    <property type="entry name" value="ABC2_membrane"/>
    <property type="match status" value="1"/>
</dbReference>
<dbReference type="Pfam" id="PF00005">
    <property type="entry name" value="ABC_tran"/>
    <property type="match status" value="1"/>
</dbReference>
<dbReference type="SMART" id="SM00382">
    <property type="entry name" value="AAA"/>
    <property type="match status" value="1"/>
</dbReference>
<dbReference type="SUPFAM" id="SSF52540">
    <property type="entry name" value="P-loop containing nucleoside triphosphate hydrolases"/>
    <property type="match status" value="1"/>
</dbReference>
<dbReference type="PROSITE" id="PS00211">
    <property type="entry name" value="ABC_TRANSPORTER_1"/>
    <property type="match status" value="1"/>
</dbReference>
<dbReference type="PROSITE" id="PS50893">
    <property type="entry name" value="ABC_TRANSPORTER_2"/>
    <property type="match status" value="1"/>
</dbReference>
<dbReference type="PROSITE" id="PS00022">
    <property type="entry name" value="EGF_1"/>
    <property type="match status" value="2"/>
</dbReference>
<name>ABCGO_DICDI</name>